<dbReference type="EMBL" id="AY050223">
    <property type="protein sequence ID" value="AAL09834.1"/>
    <property type="molecule type" value="mRNA"/>
</dbReference>
<dbReference type="EMBL" id="AB006706">
    <property type="protein sequence ID" value="BAB09578.1"/>
    <property type="molecule type" value="Genomic_DNA"/>
</dbReference>
<dbReference type="EMBL" id="CP002688">
    <property type="protein sequence ID" value="AED92469.1"/>
    <property type="molecule type" value="Genomic_DNA"/>
</dbReference>
<dbReference type="EMBL" id="AY075645">
    <property type="protein sequence ID" value="AAL77653.1"/>
    <property type="molecule type" value="mRNA"/>
</dbReference>
<dbReference type="EMBL" id="BT002233">
    <property type="protein sequence ID" value="AAN72244.1"/>
    <property type="molecule type" value="mRNA"/>
</dbReference>
<dbReference type="RefSeq" id="NP_197281.1">
    <property type="nucleotide sequence ID" value="NM_121785.3"/>
</dbReference>
<dbReference type="BioGRID" id="16923">
    <property type="interactions" value="11"/>
</dbReference>
<dbReference type="FunCoup" id="Q8S9K3">
    <property type="interactions" value="1210"/>
</dbReference>
<dbReference type="IntAct" id="Q8S9K3">
    <property type="interactions" value="8"/>
</dbReference>
<dbReference type="STRING" id="3702.Q8S9K3"/>
<dbReference type="iPTMnet" id="Q8S9K3"/>
<dbReference type="PaxDb" id="3702-AT5G17790.1"/>
<dbReference type="ProteomicsDB" id="228575"/>
<dbReference type="EnsemblPlants" id="AT5G17790.1">
    <property type="protein sequence ID" value="AT5G17790.1"/>
    <property type="gene ID" value="AT5G17790"/>
</dbReference>
<dbReference type="GeneID" id="831647"/>
<dbReference type="Gramene" id="AT5G17790.1">
    <property type="protein sequence ID" value="AT5G17790.1"/>
    <property type="gene ID" value="AT5G17790"/>
</dbReference>
<dbReference type="KEGG" id="ath:AT5G17790"/>
<dbReference type="Araport" id="AT5G17790"/>
<dbReference type="TAIR" id="AT5G17790">
    <property type="gene designation" value="VAR3"/>
</dbReference>
<dbReference type="eggNOG" id="KOG4198">
    <property type="taxonomic scope" value="Eukaryota"/>
</dbReference>
<dbReference type="HOGENOM" id="CLU_007852_1_0_1"/>
<dbReference type="InParanoid" id="Q8S9K3"/>
<dbReference type="OMA" id="NTHSKPG"/>
<dbReference type="PhylomeDB" id="Q8S9K3"/>
<dbReference type="PRO" id="PR:Q8S9K3"/>
<dbReference type="Proteomes" id="UP000006548">
    <property type="component" value="Chromosome 5"/>
</dbReference>
<dbReference type="ExpressionAtlas" id="Q8S9K3">
    <property type="expression patterns" value="baseline and differential"/>
</dbReference>
<dbReference type="GO" id="GO:0009507">
    <property type="term" value="C:chloroplast"/>
    <property type="evidence" value="ECO:0000314"/>
    <property type="project" value="TAIR"/>
</dbReference>
<dbReference type="GO" id="GO:0009570">
    <property type="term" value="C:chloroplast stroma"/>
    <property type="evidence" value="ECO:0000314"/>
    <property type="project" value="TAIR"/>
</dbReference>
<dbReference type="GO" id="GO:0003729">
    <property type="term" value="F:mRNA binding"/>
    <property type="evidence" value="ECO:0000314"/>
    <property type="project" value="TAIR"/>
</dbReference>
<dbReference type="GO" id="GO:0008270">
    <property type="term" value="F:zinc ion binding"/>
    <property type="evidence" value="ECO:0007669"/>
    <property type="project" value="UniProtKB-KW"/>
</dbReference>
<dbReference type="GO" id="GO:1900871">
    <property type="term" value="P:chloroplast mRNA modification"/>
    <property type="evidence" value="ECO:0000315"/>
    <property type="project" value="TAIR"/>
</dbReference>
<dbReference type="GO" id="GO:0009658">
    <property type="term" value="P:chloroplast organization"/>
    <property type="evidence" value="ECO:0000315"/>
    <property type="project" value="TAIR"/>
</dbReference>
<dbReference type="GO" id="GO:0006397">
    <property type="term" value="P:mRNA processing"/>
    <property type="evidence" value="ECO:0007669"/>
    <property type="project" value="UniProtKB-KW"/>
</dbReference>
<dbReference type="Gene3D" id="4.10.1060.10">
    <property type="entry name" value="Zinc finger, RanBP2-type"/>
    <property type="match status" value="2"/>
</dbReference>
<dbReference type="InterPro" id="IPR001876">
    <property type="entry name" value="Znf_RanBP2"/>
</dbReference>
<dbReference type="InterPro" id="IPR036443">
    <property type="entry name" value="Znf_RanBP2_sf"/>
</dbReference>
<dbReference type="PANTHER" id="PTHR23111">
    <property type="entry name" value="ZINC FINGER PROTEIN"/>
    <property type="match status" value="1"/>
</dbReference>
<dbReference type="PANTHER" id="PTHR23111:SF30">
    <property type="entry name" value="ZINC FINGER PROTEIN VAR3, CHLOROPLASTIC"/>
    <property type="match status" value="1"/>
</dbReference>
<dbReference type="Pfam" id="PF00641">
    <property type="entry name" value="Zn_ribbon_RanBP"/>
    <property type="match status" value="2"/>
</dbReference>
<dbReference type="SMART" id="SM00547">
    <property type="entry name" value="ZnF_RBZ"/>
    <property type="match status" value="2"/>
</dbReference>
<dbReference type="SUPFAM" id="SSF90209">
    <property type="entry name" value="Ran binding protein zinc finger-like"/>
    <property type="match status" value="1"/>
</dbReference>
<dbReference type="PROSITE" id="PS01358">
    <property type="entry name" value="ZF_RANBP2_1"/>
    <property type="match status" value="2"/>
</dbReference>
<dbReference type="PROSITE" id="PS50199">
    <property type="entry name" value="ZF_RANBP2_2"/>
    <property type="match status" value="2"/>
</dbReference>
<feature type="transit peptide" description="Chloroplast" evidence="1">
    <location>
        <begin position="1"/>
        <end status="unknown"/>
    </location>
</feature>
<feature type="chain" id="PRO_0000022653" description="Zinc finger protein VAR3, chloroplastic">
    <location>
        <begin status="unknown"/>
        <end position="758"/>
    </location>
</feature>
<feature type="repeat" description="1">
    <location>
        <begin position="368"/>
        <end position="415"/>
    </location>
</feature>
<feature type="repeat" description="2">
    <location>
        <begin position="547"/>
        <end position="596"/>
    </location>
</feature>
<feature type="repeat" description="3">
    <location>
        <begin position="688"/>
        <end position="736"/>
    </location>
</feature>
<feature type="zinc finger region" description="RanBP2-type 1" evidence="2">
    <location>
        <begin position="276"/>
        <end position="305"/>
    </location>
</feature>
<feature type="zinc finger region" description="RanBP2-type 2" evidence="2">
    <location>
        <begin position="308"/>
        <end position="338"/>
    </location>
</feature>
<feature type="region of interest" description="3 X approximate repeat">
    <location>
        <begin position="122"/>
        <end position="502"/>
    </location>
</feature>
<feature type="region of interest" description="Disordered" evidence="3">
    <location>
        <begin position="410"/>
        <end position="470"/>
    </location>
</feature>
<feature type="region of interest" description="Disordered" evidence="3">
    <location>
        <begin position="512"/>
        <end position="545"/>
    </location>
</feature>
<feature type="region of interest" description="Disordered" evidence="3">
    <location>
        <begin position="572"/>
        <end position="606"/>
    </location>
</feature>
<feature type="region of interest" description="Disordered" evidence="3">
    <location>
        <begin position="629"/>
        <end position="654"/>
    </location>
</feature>
<feature type="region of interest" description="Disordered" evidence="3">
    <location>
        <begin position="727"/>
        <end position="758"/>
    </location>
</feature>
<feature type="compositionally biased region" description="Basic and acidic residues" evidence="3">
    <location>
        <begin position="457"/>
        <end position="469"/>
    </location>
</feature>
<feature type="compositionally biased region" description="Basic and acidic residues" evidence="3">
    <location>
        <begin position="519"/>
        <end position="545"/>
    </location>
</feature>
<feature type="compositionally biased region" description="Basic and acidic residues" evidence="3">
    <location>
        <begin position="572"/>
        <end position="581"/>
    </location>
</feature>
<feature type="sequence conflict" description="In Ref. 1; AAL09834." evidence="9" ref="1">
    <original>I</original>
    <variation>V</variation>
    <location>
        <position position="29"/>
    </location>
</feature>
<feature type="sequence conflict" description="In Ref. 1; AAL09834." evidence="9" ref="1">
    <original>SF</original>
    <variation>FS</variation>
    <location>
        <begin position="52"/>
        <end position="53"/>
    </location>
</feature>
<feature type="sequence conflict" description="In Ref. 1; AAL09834." evidence="9" ref="1">
    <original>I</original>
    <variation>L</variation>
    <location>
        <position position="68"/>
    </location>
</feature>
<feature type="sequence conflict" description="In Ref. 1; AAL09834." evidence="9" ref="1">
    <original>N</original>
    <variation>T</variation>
    <location>
        <position position="73"/>
    </location>
</feature>
<feature type="sequence conflict" description="In Ref. 1; AAL09834." evidence="9" ref="1">
    <original>D</original>
    <variation>E</variation>
    <location>
        <position position="82"/>
    </location>
</feature>
<feature type="sequence conflict" description="In Ref. 1; AAL09834." evidence="9" ref="1">
    <original>N</original>
    <variation>H</variation>
    <location>
        <position position="89"/>
    </location>
</feature>
<feature type="sequence conflict" description="In Ref. 1; AAL09834." evidence="9" ref="1">
    <original>L</original>
    <variation>M</variation>
    <location>
        <position position="158"/>
    </location>
</feature>
<feature type="sequence conflict" description="In Ref. 1; AAL09834." evidence="9" ref="1">
    <original>K</original>
    <variation>R</variation>
    <location>
        <position position="168"/>
    </location>
</feature>
<feature type="sequence conflict" description="In Ref. 1; AAL09834." evidence="9" ref="1">
    <original>S</original>
    <variation>G</variation>
    <location>
        <position position="178"/>
    </location>
</feature>
<feature type="sequence conflict" description="In Ref. 1; AAL09834." evidence="9" ref="1">
    <original>L</original>
    <variation>V</variation>
    <location>
        <position position="185"/>
    </location>
</feature>
<feature type="sequence conflict" description="In Ref. 1; AAL09834." evidence="9" ref="1">
    <original>I</original>
    <variation>L</variation>
    <location>
        <position position="188"/>
    </location>
</feature>
<feature type="sequence conflict" description="In Ref. 1; AAL09834." evidence="9" ref="1">
    <original>L</original>
    <variation>M</variation>
    <location>
        <position position="191"/>
    </location>
</feature>
<feature type="sequence conflict" description="In Ref. 1; AAL09834." evidence="9" ref="1">
    <original>I</original>
    <variation>L</variation>
    <location>
        <position position="206"/>
    </location>
</feature>
<feature type="sequence conflict" description="In Ref. 1; AAL09834." evidence="9" ref="1">
    <original>A</original>
    <variation>T</variation>
    <location>
        <position position="214"/>
    </location>
</feature>
<feature type="sequence conflict" description="In Ref. 1; AAL09834." evidence="9" ref="1">
    <original>SKQHNK</original>
    <variation>IKHHNQ</variation>
    <location>
        <begin position="219"/>
        <end position="224"/>
    </location>
</feature>
<feature type="sequence conflict" description="In Ref. 1; AAL09834." evidence="9" ref="1">
    <original>A</original>
    <variation>T</variation>
    <location>
        <position position="239"/>
    </location>
</feature>
<feature type="sequence conflict" description="In Ref. 1; AAL09834." evidence="9" ref="1">
    <original>D</original>
    <variation>G</variation>
    <location>
        <position position="252"/>
    </location>
</feature>
<feature type="sequence conflict" description="In Ref. 1; AAL09834." evidence="9" ref="1">
    <original>G</original>
    <variation>A</variation>
    <location>
        <position position="265"/>
    </location>
</feature>
<feature type="sequence conflict" description="In Ref. 1; AAL09834." evidence="9" ref="1">
    <original>S</original>
    <variation>A</variation>
    <location>
        <position position="340"/>
    </location>
</feature>
<feature type="sequence conflict" description="In Ref. 1; AAL09834." evidence="9" ref="1">
    <original>D</original>
    <variation>G</variation>
    <location>
        <position position="348"/>
    </location>
</feature>
<feature type="sequence conflict" description="In Ref. 1; AAL09834." evidence="9" ref="1">
    <original>S</original>
    <variation>N</variation>
    <location>
        <position position="351"/>
    </location>
</feature>
<feature type="sequence conflict" description="In Ref. 1; AAL09834." evidence="9" ref="1">
    <original>R</original>
    <variation>S</variation>
    <location>
        <position position="357"/>
    </location>
</feature>
<feature type="sequence conflict" description="In Ref. 1; AAL09834." evidence="9" ref="1">
    <original>L</original>
    <variation>F</variation>
    <location>
        <position position="370"/>
    </location>
</feature>
<feature type="sequence conflict" description="In Ref. 1; AAL09834." evidence="9" ref="1">
    <original>P</original>
    <variation>T</variation>
    <location>
        <position position="409"/>
    </location>
</feature>
<feature type="sequence conflict" description="In Ref. 1; AAL09834." evidence="9" ref="1">
    <original>R</original>
    <variation>S</variation>
    <location>
        <position position="421"/>
    </location>
</feature>
<feature type="sequence conflict" description="In Ref. 1; AAL09834." evidence="9" ref="1">
    <original>N</original>
    <variation>S</variation>
    <location>
        <position position="427"/>
    </location>
</feature>
<feature type="sequence conflict" description="In Ref. 1; AAL09834." evidence="9" ref="1">
    <original>I</original>
    <variation>T</variation>
    <location>
        <position position="502"/>
    </location>
</feature>
<feature type="sequence conflict" description="In Ref. 1; AAL09834." evidence="9" ref="1">
    <original>IQVDGF</original>
    <variation>NQIDGV</variation>
    <location>
        <begin position="505"/>
        <end position="510"/>
    </location>
</feature>
<feature type="sequence conflict" description="In Ref. 1; AAL09834." evidence="9" ref="1">
    <original>A</original>
    <variation>G</variation>
    <location>
        <position position="546"/>
    </location>
</feature>
<feature type="sequence conflict" description="In Ref. 1; AAL09834." evidence="9" ref="1">
    <original>I</original>
    <variation>M</variation>
    <location>
        <position position="565"/>
    </location>
</feature>
<feature type="sequence conflict" description="In Ref. 1; AAL09834." evidence="9" ref="1">
    <original>G</original>
    <variation>E</variation>
    <location>
        <position position="579"/>
    </location>
</feature>
<feature type="sequence conflict" description="In Ref. 1; AAL09834." evidence="9" ref="1">
    <original>KQPKES</original>
    <variation>RQLKEP</variation>
    <location>
        <begin position="621"/>
        <end position="626"/>
    </location>
</feature>
<feature type="sequence conflict" description="In Ref. 1; AAL09834." evidence="9" ref="1">
    <original>L</original>
    <variation>I</variation>
    <location>
        <position position="630"/>
    </location>
</feature>
<feature type="sequence conflict" description="In Ref. 1; AAL09834." evidence="9" ref="1">
    <original>N</original>
    <variation>K</variation>
    <location>
        <position position="637"/>
    </location>
</feature>
<feature type="sequence conflict" description="In Ref. 1; AAL09834." evidence="9" ref="1">
    <original>P</original>
    <variation>A</variation>
    <location>
        <position position="646"/>
    </location>
</feature>
<feature type="sequence conflict" description="In Ref. 1; AAL09834." evidence="9" ref="1">
    <original>PSI</original>
    <variation>SSS</variation>
    <location>
        <begin position="649"/>
        <end position="651"/>
    </location>
</feature>
<feature type="sequence conflict" description="In Ref. 1; AAL09834." evidence="9" ref="1">
    <original>DT</original>
    <variation>ER</variation>
    <location>
        <begin position="655"/>
        <end position="656"/>
    </location>
</feature>
<feature type="sequence conflict" description="In Ref. 1; AAL09834." evidence="9" ref="1">
    <original>VK</original>
    <variation>GM</variation>
    <location>
        <begin position="659"/>
        <end position="660"/>
    </location>
</feature>
<feature type="sequence conflict" description="In Ref. 4; AAL77653/AAN72244." evidence="9" ref="4">
    <original>S</original>
    <variation>R</variation>
    <location>
        <position position="666"/>
    </location>
</feature>
<feature type="sequence conflict" description="In Ref. 1; AAL09834." evidence="9" ref="1">
    <original>S</original>
    <variation>P</variation>
    <location>
        <position position="675"/>
    </location>
</feature>
<feature type="sequence conflict" description="In Ref. 1; AAL09834." evidence="9" ref="1">
    <original>N</original>
    <variation>D</variation>
    <location>
        <position position="749"/>
    </location>
</feature>
<proteinExistence type="evidence at protein level"/>
<protein>
    <recommendedName>
        <fullName evidence="9">Zinc finger protein VAR3, chloroplastic</fullName>
    </recommendedName>
    <alternativeName>
        <fullName evidence="8">Organelle Zinc finger 1</fullName>
    </alternativeName>
    <alternativeName>
        <fullName evidence="7">Protein VARIEGATED 3</fullName>
    </alternativeName>
</protein>
<sequence length="758" mass="85945">MNNSTRLISLFSPHPPPLFLLRGLYISRIANLRRFHRRAFPPSSVASTNLCSFRPLVSLPPLIPTFPIGRFYNHQVRVSAADFVPSYHNQQLPEWTELLQSLSKAGYFSDSGSISGLESEFFPGFPDELLRPALACLALARERPELLEMLSRRDVEVLVENGKPFLFKTGPDSLKRMSLYLRSGLQGIGKLMDMEKASTVDLMRLILSYVVDVASSEESKQHNKEIMESSVRSLLSQIAKMSLRPPESNVHDTMQNQYSDRDGQGVRSFQNNVEMKRGDWICSRCSGMNFARNVKCFQCDEARPKRQLTGSEWECPQCDFYNYGRNVACLRCDCKRPRDSSLNSANSDYSSDPELERRLVENEKKAQRWLSKVAQGGSDANSVDTDEDFPEIMPLRKGVNRYVVSTRKPPLERRLANTENRVATDGNSKRSDDNALGSKTTRSLNEILGSSSSLTSRSDDKNVSSRRFESSQGINTDFVPFVPLPSDMFAKKPKEETQIGLIDNIQVDGFSGGNQNVYQEDKSDANHSGKETDRLEKEDHKSEEPARWFKRVTELHNVSDLESAIPQEISPEKMPMRKGENRFVVSRKKDRSLTSPAYKRPEDSDFVPFVPFPPDYFAKEKQPKESIDTLPAPATENVSQVVQQEPREPSINKSDTVAVKIRNGKSLEGSLVKESDLLDMSEEAKAERWFKRVAEIKNISELSEIPDEDFPSIMPMRKGVNRFVVSKRKTPLERRLTSQRHQRNPHITNSDPTGKGDK</sequence>
<organism>
    <name type="scientific">Arabidopsis thaliana</name>
    <name type="common">Mouse-ear cress</name>
    <dbReference type="NCBI Taxonomy" id="3702"/>
    <lineage>
        <taxon>Eukaryota</taxon>
        <taxon>Viridiplantae</taxon>
        <taxon>Streptophyta</taxon>
        <taxon>Embryophyta</taxon>
        <taxon>Tracheophyta</taxon>
        <taxon>Spermatophyta</taxon>
        <taxon>Magnoliopsida</taxon>
        <taxon>eudicotyledons</taxon>
        <taxon>Gunneridae</taxon>
        <taxon>Pentapetalae</taxon>
        <taxon>rosids</taxon>
        <taxon>malvids</taxon>
        <taxon>Brassicales</taxon>
        <taxon>Brassicaceae</taxon>
        <taxon>Camelineae</taxon>
        <taxon>Arabidopsis</taxon>
    </lineage>
</organism>
<reference key="1">
    <citation type="journal article" date="2004" name="J. Cell Sci.">
        <title>Arabidopsis VARIEGATED 3 encodes a chloroplast-targeted, zinc-finger protein required for chloroplast and palisade cell development.</title>
        <authorList>
            <person name="Naested H."/>
            <person name="Holm A."/>
            <person name="Jenkins T."/>
            <person name="Nielsen H.B."/>
            <person name="Harris C.A."/>
            <person name="Beale M.H."/>
            <person name="Andersen M."/>
            <person name="Mant A."/>
            <person name="Scheller H."/>
            <person name="Camara B."/>
            <person name="Mattsson O."/>
            <person name="Mundy J."/>
        </authorList>
    </citation>
    <scope>NUCLEOTIDE SEQUENCE [MRNA]</scope>
    <scope>FUNCTION</scope>
    <scope>SUBCELLULAR LOCATION</scope>
    <scope>TISSUE SPECIFICITY</scope>
    <scope>INTERACTION WITH CCD4/NCED4</scope>
    <scope>DISRUPTION PHENOTYPE</scope>
    <source>
        <strain>cv. Landsberg erecta</strain>
        <tissue>Flower</tissue>
    </source>
</reference>
<reference key="2">
    <citation type="journal article" date="1997" name="DNA Res.">
        <title>Structural analysis of Arabidopsis thaliana chromosome 5. II. Sequence features of the regions of 1,044,062 bp covered by thirteen physically assigned P1 clones.</title>
        <authorList>
            <person name="Kotani H."/>
            <person name="Nakamura Y."/>
            <person name="Sato S."/>
            <person name="Kaneko T."/>
            <person name="Asamizu E."/>
            <person name="Miyajima N."/>
            <person name="Tabata S."/>
        </authorList>
    </citation>
    <scope>NUCLEOTIDE SEQUENCE [LARGE SCALE GENOMIC DNA]</scope>
    <source>
        <strain>cv. Columbia</strain>
    </source>
</reference>
<reference key="3">
    <citation type="journal article" date="2017" name="Plant J.">
        <title>Araport11: a complete reannotation of the Arabidopsis thaliana reference genome.</title>
        <authorList>
            <person name="Cheng C.Y."/>
            <person name="Krishnakumar V."/>
            <person name="Chan A.P."/>
            <person name="Thibaud-Nissen F."/>
            <person name="Schobel S."/>
            <person name="Town C.D."/>
        </authorList>
    </citation>
    <scope>GENOME REANNOTATION</scope>
    <source>
        <strain>cv. Columbia</strain>
    </source>
</reference>
<reference key="4">
    <citation type="journal article" date="2003" name="Science">
        <title>Empirical analysis of transcriptional activity in the Arabidopsis genome.</title>
        <authorList>
            <person name="Yamada K."/>
            <person name="Lim J."/>
            <person name="Dale J.M."/>
            <person name="Chen H."/>
            <person name="Shinn P."/>
            <person name="Palm C.J."/>
            <person name="Southwick A.M."/>
            <person name="Wu H.C."/>
            <person name="Kim C.J."/>
            <person name="Nguyen M."/>
            <person name="Pham P.K."/>
            <person name="Cheuk R.F."/>
            <person name="Karlin-Newmann G."/>
            <person name="Liu S.X."/>
            <person name="Lam B."/>
            <person name="Sakano H."/>
            <person name="Wu T."/>
            <person name="Yu G."/>
            <person name="Miranda M."/>
            <person name="Quach H.L."/>
            <person name="Tripp M."/>
            <person name="Chang C.H."/>
            <person name="Lee J.M."/>
            <person name="Toriumi M.J."/>
            <person name="Chan M.M."/>
            <person name="Tang C.C."/>
            <person name="Onodera C.S."/>
            <person name="Deng J.M."/>
            <person name="Akiyama K."/>
            <person name="Ansari Y."/>
            <person name="Arakawa T."/>
            <person name="Banh J."/>
            <person name="Banno F."/>
            <person name="Bowser L."/>
            <person name="Brooks S.Y."/>
            <person name="Carninci P."/>
            <person name="Chao Q."/>
            <person name="Choy N."/>
            <person name="Enju A."/>
            <person name="Goldsmith A.D."/>
            <person name="Gurjal M."/>
            <person name="Hansen N.F."/>
            <person name="Hayashizaki Y."/>
            <person name="Johnson-Hopson C."/>
            <person name="Hsuan V.W."/>
            <person name="Iida K."/>
            <person name="Karnes M."/>
            <person name="Khan S."/>
            <person name="Koesema E."/>
            <person name="Ishida J."/>
            <person name="Jiang P.X."/>
            <person name="Jones T."/>
            <person name="Kawai J."/>
            <person name="Kamiya A."/>
            <person name="Meyers C."/>
            <person name="Nakajima M."/>
            <person name="Narusaka M."/>
            <person name="Seki M."/>
            <person name="Sakurai T."/>
            <person name="Satou M."/>
            <person name="Tamse R."/>
            <person name="Vaysberg M."/>
            <person name="Wallender E.K."/>
            <person name="Wong C."/>
            <person name="Yamamura Y."/>
            <person name="Yuan S."/>
            <person name="Shinozaki K."/>
            <person name="Davis R.W."/>
            <person name="Theologis A."/>
            <person name="Ecker J.R."/>
        </authorList>
    </citation>
    <scope>NUCLEOTIDE SEQUENCE [LARGE SCALE MRNA]</scope>
    <source>
        <strain>cv. Columbia</strain>
    </source>
</reference>
<reference key="5">
    <citation type="journal article" date="2015" name="PLoS Genet.">
        <title>A zinc finger motif-containing protein is essential for chloroplast RNA editing.</title>
        <authorList>
            <person name="Sun T."/>
            <person name="Shi X."/>
            <person name="Friso G."/>
            <person name="Van Wijk K."/>
            <person name="Bentolila S."/>
            <person name="Hanson M.R."/>
        </authorList>
    </citation>
    <scope>FUNCTION</scope>
    <scope>HOMODIMERIZATION</scope>
    <scope>INTERACTION WITH ORRM1</scope>
    <scope>INTERACTION WITH PCMP-H51/CRR28 AND PCMP-H12/OTP82</scope>
    <scope>SUBCELLULAR LOCATION</scope>
    <scope>DISRUPTION PHENOTYPE</scope>
</reference>
<reference key="6">
    <citation type="journal article" date="2017" name="Plant Physiol.">
        <title>An organelle RNA recognition motif protein is required for photosynthetic subunit psbF transcript editing.</title>
        <authorList>
            <person name="Hackett J.B."/>
            <person name="Shi X."/>
            <person name="Kobylarz A.T."/>
            <person name="Lucas M.K."/>
            <person name="Wessendorf R.L."/>
            <person name="Hines K.M."/>
            <person name="Bentolila S."/>
            <person name="Hanson M.R."/>
            <person name="Lu Y."/>
        </authorList>
    </citation>
    <scope>INTERACTION WITH ORRM6</scope>
    <scope>SUBCELLULAR LOCATION</scope>
</reference>
<gene>
    <name evidence="7" type="primary">VAR3</name>
    <name evidence="8" type="synonym">OZ1</name>
    <name type="ordered locus">At5g17790</name>
    <name type="ORF">MVA3.140</name>
    <name type="ORF">MVA3.15</name>
</gene>
<keyword id="KW-0150">Chloroplast</keyword>
<keyword id="KW-0479">Metal-binding</keyword>
<keyword id="KW-0507">mRNA processing</keyword>
<keyword id="KW-0934">Plastid</keyword>
<keyword id="KW-1185">Reference proteome</keyword>
<keyword id="KW-0677">Repeat</keyword>
<keyword id="KW-0809">Transit peptide</keyword>
<keyword id="KW-0862">Zinc</keyword>
<keyword id="KW-0863">Zinc-finger</keyword>
<comment type="function">
    <text evidence="4 5">Probable component of some protein complex required for chloroplast and palisade cell development (PubMed:15340011). Involved in C-to-U editing of chloroplastic RNA. Controls a large number of chloroplastic editing sites. Binds the editing recognition trans-factors PCMP-H51/CRR28 and PCMP-H12/OTP82 (PubMed:25768119).</text>
</comment>
<comment type="subunit">
    <text evidence="4 5 6">Interacts in vitro with the chloroplast-located protein CCD4/NCED4 (PubMed:15340011). Homodimer. Interacts with ORRM1. Interacts with PCMP-H51/CRR28 and PCMP-H12/OTP82 (PubMed:25768119). Interacts with ORRM6 (PubMed:28213559).</text>
</comment>
<comment type="interaction">
    <interactant intactId="EBI-632401">
        <id>Q8S9K3</id>
    </interactant>
    <interactant intactId="EBI-632411">
        <id>O49675</id>
        <label>CCD4</label>
    </interactant>
    <organismsDiffer>false</organismsDiffer>
    <experiments>2</experiments>
</comment>
<comment type="subcellular location">
    <subcellularLocation>
        <location evidence="4 5 6">Plastid</location>
        <location evidence="4 5 6">Chloroplast</location>
    </subcellularLocation>
    <text evidence="5">Localizes at punctuate loci in chloroplasts.</text>
</comment>
<comment type="tissue specificity">
    <text evidence="4">Weakly expressed in leaves and roots.</text>
</comment>
<comment type="disruption phenotype">
    <text evidence="4 5">Defects result in variegated plants that have leaves consisting of normal green and also white or yellow sectors in which chloroplast development is retarded or disrupted (PubMed:15340011, PubMed:25768119). Mutant plants exhibit severe editing defects in chloroplastic transcripts (PubMed:25768119).</text>
</comment>
<name>VAR3_ARATH</name>
<evidence type="ECO:0000255" key="1"/>
<evidence type="ECO:0000255" key="2">
    <source>
        <dbReference type="PROSITE-ProRule" id="PRU00322"/>
    </source>
</evidence>
<evidence type="ECO:0000256" key="3">
    <source>
        <dbReference type="SAM" id="MobiDB-lite"/>
    </source>
</evidence>
<evidence type="ECO:0000269" key="4">
    <source>
    </source>
</evidence>
<evidence type="ECO:0000269" key="5">
    <source>
    </source>
</evidence>
<evidence type="ECO:0000269" key="6">
    <source>
    </source>
</evidence>
<evidence type="ECO:0000303" key="7">
    <source>
    </source>
</evidence>
<evidence type="ECO:0000303" key="8">
    <source>
    </source>
</evidence>
<evidence type="ECO:0000305" key="9"/>
<accession>Q8S9K3</accession>
<accession>Q64M74</accession>
<accession>Q9FN73</accession>